<accession>A5F028</accession>
<accession>C3M5W3</accession>
<keyword id="KW-0963">Cytoplasm</keyword>
<keyword id="KW-0570">Pentose shunt</keyword>
<keyword id="KW-0704">Schiff base</keyword>
<keyword id="KW-0808">Transferase</keyword>
<proteinExistence type="inferred from homology"/>
<reference key="1">
    <citation type="submission" date="2007-03" db="EMBL/GenBank/DDBJ databases">
        <authorList>
            <person name="Heidelberg J."/>
        </authorList>
    </citation>
    <scope>NUCLEOTIDE SEQUENCE [LARGE SCALE GENOMIC DNA]</scope>
    <source>
        <strain>ATCC 39541 / Classical Ogawa 395 / O395</strain>
    </source>
</reference>
<reference key="2">
    <citation type="journal article" date="2008" name="PLoS ONE">
        <title>A recalibrated molecular clock and independent origins for the cholera pandemic clones.</title>
        <authorList>
            <person name="Feng L."/>
            <person name="Reeves P.R."/>
            <person name="Lan R."/>
            <person name="Ren Y."/>
            <person name="Gao C."/>
            <person name="Zhou Z."/>
            <person name="Ren Y."/>
            <person name="Cheng J."/>
            <person name="Wang W."/>
            <person name="Wang J."/>
            <person name="Qian W."/>
            <person name="Li D."/>
            <person name="Wang L."/>
        </authorList>
    </citation>
    <scope>NUCLEOTIDE SEQUENCE [LARGE SCALE GENOMIC DNA]</scope>
    <source>
        <strain>ATCC 39541 / Classical Ogawa 395 / O395</strain>
    </source>
</reference>
<organism>
    <name type="scientific">Vibrio cholerae serotype O1 (strain ATCC 39541 / Classical Ogawa 395 / O395)</name>
    <dbReference type="NCBI Taxonomy" id="345073"/>
    <lineage>
        <taxon>Bacteria</taxon>
        <taxon>Pseudomonadati</taxon>
        <taxon>Pseudomonadota</taxon>
        <taxon>Gammaproteobacteria</taxon>
        <taxon>Vibrionales</taxon>
        <taxon>Vibrionaceae</taxon>
        <taxon>Vibrio</taxon>
    </lineage>
</organism>
<sequence length="316" mass="34666">MSNKLAQLRKLTTVVADTGEIDAIKKYQPEDATTNPSLILKAAQIAEYAPLIDQAIAYAKTQSNDKAQQVQDTCDMLAVNIGKEILKTIPGRISTEVDARLSYDMERSVAKARQLVKMYNDAGISNDRILIKLASTWEGIRAAEILEKEGINCNLTLLFSFAQARACAEAGVFLISPFVGRIMDWYKAKEGRDFAASEDPGVLSVTKIYNYYKEHGYKTVVMGASFRNIGEILELAGCDRLTIAPSLLAELEAAEGELVAKLVDSKGSKARPAPMTHSEFLWEHNLDAMAVEKLAEGIRNFAVDQGKLEAMIAAKL</sequence>
<feature type="chain" id="PRO_1000072428" description="Transaldolase">
    <location>
        <begin position="1"/>
        <end position="316"/>
    </location>
</feature>
<feature type="active site" description="Schiff-base intermediate with substrate" evidence="2">
    <location>
        <position position="132"/>
    </location>
</feature>
<gene>
    <name evidence="2" type="primary">tal</name>
    <name type="synonym">talB</name>
    <name type="ordered locus">VC0395_0564</name>
    <name type="ordered locus">VC395_A0692</name>
</gene>
<comment type="function">
    <text evidence="2">Transaldolase is important for the balance of metabolites in the pentose-phosphate pathway.</text>
</comment>
<comment type="catalytic activity">
    <reaction evidence="2">
        <text>D-sedoheptulose 7-phosphate + D-glyceraldehyde 3-phosphate = D-erythrose 4-phosphate + beta-D-fructose 6-phosphate</text>
        <dbReference type="Rhea" id="RHEA:17053"/>
        <dbReference type="ChEBI" id="CHEBI:16897"/>
        <dbReference type="ChEBI" id="CHEBI:57483"/>
        <dbReference type="ChEBI" id="CHEBI:57634"/>
        <dbReference type="ChEBI" id="CHEBI:59776"/>
        <dbReference type="EC" id="2.2.1.2"/>
    </reaction>
</comment>
<comment type="pathway">
    <text evidence="2">Carbohydrate degradation; pentose phosphate pathway; D-glyceraldehyde 3-phosphate and beta-D-fructose 6-phosphate from D-ribose 5-phosphate and D-xylulose 5-phosphate (non-oxidative stage): step 2/3.</text>
</comment>
<comment type="subunit">
    <text evidence="1">Homodimer.</text>
</comment>
<comment type="subcellular location">
    <subcellularLocation>
        <location evidence="2">Cytoplasm</location>
    </subcellularLocation>
</comment>
<comment type="similarity">
    <text evidence="2">Belongs to the transaldolase family. Type 1 subfamily.</text>
</comment>
<evidence type="ECO:0000250" key="1"/>
<evidence type="ECO:0000255" key="2">
    <source>
        <dbReference type="HAMAP-Rule" id="MF_00492"/>
    </source>
</evidence>
<protein>
    <recommendedName>
        <fullName evidence="2">Transaldolase</fullName>
        <ecNumber evidence="2">2.2.1.2</ecNumber>
    </recommendedName>
</protein>
<dbReference type="EC" id="2.2.1.2" evidence="2"/>
<dbReference type="EMBL" id="CP000626">
    <property type="protein sequence ID" value="ABQ19067.1"/>
    <property type="molecule type" value="Genomic_DNA"/>
</dbReference>
<dbReference type="EMBL" id="CP001236">
    <property type="protein sequence ID" value="ACP11526.1"/>
    <property type="molecule type" value="Genomic_DNA"/>
</dbReference>
<dbReference type="RefSeq" id="WP_000066340.1">
    <property type="nucleotide sequence ID" value="NZ_JAACZH010000032.1"/>
</dbReference>
<dbReference type="SMR" id="A5F028"/>
<dbReference type="KEGG" id="vco:VC0395_0564"/>
<dbReference type="KEGG" id="vcr:VC395_A0692"/>
<dbReference type="PATRIC" id="fig|345073.21.peg.3426"/>
<dbReference type="eggNOG" id="COG0176">
    <property type="taxonomic scope" value="Bacteria"/>
</dbReference>
<dbReference type="HOGENOM" id="CLU_047470_0_1_6"/>
<dbReference type="OrthoDB" id="9809101at2"/>
<dbReference type="UniPathway" id="UPA00115">
    <property type="reaction ID" value="UER00414"/>
</dbReference>
<dbReference type="Proteomes" id="UP000000249">
    <property type="component" value="Chromosome 1"/>
</dbReference>
<dbReference type="GO" id="GO:0005829">
    <property type="term" value="C:cytosol"/>
    <property type="evidence" value="ECO:0007669"/>
    <property type="project" value="TreeGrafter"/>
</dbReference>
<dbReference type="GO" id="GO:0004801">
    <property type="term" value="F:transaldolase activity"/>
    <property type="evidence" value="ECO:0000250"/>
    <property type="project" value="UniProtKB"/>
</dbReference>
<dbReference type="GO" id="GO:0005975">
    <property type="term" value="P:carbohydrate metabolic process"/>
    <property type="evidence" value="ECO:0007669"/>
    <property type="project" value="InterPro"/>
</dbReference>
<dbReference type="GO" id="GO:0006098">
    <property type="term" value="P:pentose-phosphate shunt"/>
    <property type="evidence" value="ECO:0007669"/>
    <property type="project" value="UniProtKB-UniRule"/>
</dbReference>
<dbReference type="CDD" id="cd00957">
    <property type="entry name" value="Transaldolase_TalAB"/>
    <property type="match status" value="1"/>
</dbReference>
<dbReference type="FunFam" id="3.20.20.70:FF:000002">
    <property type="entry name" value="Transaldolase"/>
    <property type="match status" value="1"/>
</dbReference>
<dbReference type="Gene3D" id="3.20.20.70">
    <property type="entry name" value="Aldolase class I"/>
    <property type="match status" value="1"/>
</dbReference>
<dbReference type="HAMAP" id="MF_00492">
    <property type="entry name" value="Transaldolase_1"/>
    <property type="match status" value="1"/>
</dbReference>
<dbReference type="InterPro" id="IPR013785">
    <property type="entry name" value="Aldolase_TIM"/>
</dbReference>
<dbReference type="InterPro" id="IPR001585">
    <property type="entry name" value="TAL/FSA"/>
</dbReference>
<dbReference type="InterPro" id="IPR004730">
    <property type="entry name" value="Transaldolase_1"/>
</dbReference>
<dbReference type="InterPro" id="IPR018225">
    <property type="entry name" value="Transaldolase_AS"/>
</dbReference>
<dbReference type="NCBIfam" id="NF009001">
    <property type="entry name" value="PRK12346.1"/>
    <property type="match status" value="1"/>
</dbReference>
<dbReference type="NCBIfam" id="TIGR00874">
    <property type="entry name" value="talAB"/>
    <property type="match status" value="1"/>
</dbReference>
<dbReference type="PANTHER" id="PTHR10683">
    <property type="entry name" value="TRANSALDOLASE"/>
    <property type="match status" value="1"/>
</dbReference>
<dbReference type="PANTHER" id="PTHR10683:SF18">
    <property type="entry name" value="TRANSALDOLASE"/>
    <property type="match status" value="1"/>
</dbReference>
<dbReference type="Pfam" id="PF00923">
    <property type="entry name" value="TAL_FSA"/>
    <property type="match status" value="1"/>
</dbReference>
<dbReference type="SUPFAM" id="SSF51569">
    <property type="entry name" value="Aldolase"/>
    <property type="match status" value="1"/>
</dbReference>
<dbReference type="PROSITE" id="PS01054">
    <property type="entry name" value="TRANSALDOLASE_1"/>
    <property type="match status" value="1"/>
</dbReference>
<dbReference type="PROSITE" id="PS00958">
    <property type="entry name" value="TRANSALDOLASE_2"/>
    <property type="match status" value="1"/>
</dbReference>
<name>TAL_VIBC3</name>